<comment type="catalytic activity">
    <reaction evidence="1">
        <text>1-(5-phospho-beta-D-ribosyl)-5-[(5-phospho-beta-D-ribosylamino)methylideneamino]imidazole-4-carboxamide = 5-[(5-phospho-1-deoxy-D-ribulos-1-ylimino)methylamino]-1-(5-phospho-beta-D-ribosyl)imidazole-4-carboxamide</text>
        <dbReference type="Rhea" id="RHEA:15469"/>
        <dbReference type="ChEBI" id="CHEBI:58435"/>
        <dbReference type="ChEBI" id="CHEBI:58525"/>
        <dbReference type="EC" id="5.3.1.16"/>
    </reaction>
</comment>
<comment type="pathway">
    <text evidence="1">Amino-acid biosynthesis; L-histidine biosynthesis; L-histidine from 5-phospho-alpha-D-ribose 1-diphosphate: step 4/9.</text>
</comment>
<comment type="subcellular location">
    <subcellularLocation>
        <location evidence="1">Cytoplasm</location>
    </subcellularLocation>
</comment>
<comment type="similarity">
    <text evidence="1">Belongs to the HisA/HisF family.</text>
</comment>
<sequence>MEIFPAIDLKEGRCVRLYQGEFSKETVMNEDPVAQAIIFETFGAKRLHIVDLDGAVAGESLNLSVIERICKAVRIPVQVGGGIRSLVSVEKLFSVGVDKVILGTAALYDKPFLEETVRLYKEKIIVGIDAKNGFVATRGWLDVSEISYIDLAKQMEKIGVQTIVFTDISKDGTLAGPNVEQLELLQKNVATRLIASGGIASIQDVKKLNDMNIYGVIIGKALYEKTIDLEEVLEVTKLC</sequence>
<name>HIS4_BACC7</name>
<accession>B7HKD3</accession>
<proteinExistence type="inferred from homology"/>
<reference key="1">
    <citation type="submission" date="2008-10" db="EMBL/GenBank/DDBJ databases">
        <title>Genome sequence of Bacillus cereus AH187.</title>
        <authorList>
            <person name="Dodson R.J."/>
            <person name="Durkin A.S."/>
            <person name="Rosovitz M.J."/>
            <person name="Rasko D.A."/>
            <person name="Kolsto A.B."/>
            <person name="Okstad O.A."/>
            <person name="Ravel J."/>
            <person name="Sutton G."/>
        </authorList>
    </citation>
    <scope>NUCLEOTIDE SEQUENCE [LARGE SCALE GENOMIC DNA]</scope>
    <source>
        <strain>AH187</strain>
    </source>
</reference>
<protein>
    <recommendedName>
        <fullName evidence="1">1-(5-phosphoribosyl)-5-[(5-phosphoribosylamino)methylideneamino] imidazole-4-carboxamide isomerase</fullName>
        <ecNumber evidence="1">5.3.1.16</ecNumber>
    </recommendedName>
    <alternativeName>
        <fullName evidence="1">Phosphoribosylformimino-5-aminoimidazole carboxamide ribotide isomerase</fullName>
    </alternativeName>
</protein>
<organism>
    <name type="scientific">Bacillus cereus (strain AH187)</name>
    <dbReference type="NCBI Taxonomy" id="405534"/>
    <lineage>
        <taxon>Bacteria</taxon>
        <taxon>Bacillati</taxon>
        <taxon>Bacillota</taxon>
        <taxon>Bacilli</taxon>
        <taxon>Bacillales</taxon>
        <taxon>Bacillaceae</taxon>
        <taxon>Bacillus</taxon>
        <taxon>Bacillus cereus group</taxon>
    </lineage>
</organism>
<evidence type="ECO:0000255" key="1">
    <source>
        <dbReference type="HAMAP-Rule" id="MF_01014"/>
    </source>
</evidence>
<feature type="chain" id="PRO_1000135081" description="1-(5-phosphoribosyl)-5-[(5-phosphoribosylamino)methylideneamino] imidazole-4-carboxamide isomerase">
    <location>
        <begin position="1"/>
        <end position="239"/>
    </location>
</feature>
<feature type="active site" description="Proton acceptor" evidence="1">
    <location>
        <position position="8"/>
    </location>
</feature>
<feature type="active site" description="Proton donor" evidence="1">
    <location>
        <position position="129"/>
    </location>
</feature>
<keyword id="KW-0028">Amino-acid biosynthesis</keyword>
<keyword id="KW-0963">Cytoplasm</keyword>
<keyword id="KW-0368">Histidine biosynthesis</keyword>
<keyword id="KW-0413">Isomerase</keyword>
<dbReference type="EC" id="5.3.1.16" evidence="1"/>
<dbReference type="EMBL" id="CP001177">
    <property type="protein sequence ID" value="ACJ80996.1"/>
    <property type="molecule type" value="Genomic_DNA"/>
</dbReference>
<dbReference type="SMR" id="B7HKD3"/>
<dbReference type="KEGG" id="bcr:BCAH187_A1568"/>
<dbReference type="HOGENOM" id="CLU_048577_1_1_9"/>
<dbReference type="UniPathway" id="UPA00031">
    <property type="reaction ID" value="UER00009"/>
</dbReference>
<dbReference type="Proteomes" id="UP000002214">
    <property type="component" value="Chromosome"/>
</dbReference>
<dbReference type="GO" id="GO:0005737">
    <property type="term" value="C:cytoplasm"/>
    <property type="evidence" value="ECO:0007669"/>
    <property type="project" value="UniProtKB-SubCell"/>
</dbReference>
<dbReference type="GO" id="GO:0003949">
    <property type="term" value="F:1-(5-phosphoribosyl)-5-[(5-phosphoribosylamino)methylideneamino]imidazole-4-carboxamide isomerase activity"/>
    <property type="evidence" value="ECO:0007669"/>
    <property type="project" value="UniProtKB-UniRule"/>
</dbReference>
<dbReference type="GO" id="GO:0000105">
    <property type="term" value="P:L-histidine biosynthetic process"/>
    <property type="evidence" value="ECO:0007669"/>
    <property type="project" value="UniProtKB-UniRule"/>
</dbReference>
<dbReference type="GO" id="GO:0000162">
    <property type="term" value="P:L-tryptophan biosynthetic process"/>
    <property type="evidence" value="ECO:0007669"/>
    <property type="project" value="TreeGrafter"/>
</dbReference>
<dbReference type="CDD" id="cd04732">
    <property type="entry name" value="HisA"/>
    <property type="match status" value="1"/>
</dbReference>
<dbReference type="FunFam" id="3.20.20.70:FF:000009">
    <property type="entry name" value="1-(5-phosphoribosyl)-5-[(5-phosphoribosylamino)methylideneamino] imidazole-4-carboxamide isomerase"/>
    <property type="match status" value="1"/>
</dbReference>
<dbReference type="Gene3D" id="3.20.20.70">
    <property type="entry name" value="Aldolase class I"/>
    <property type="match status" value="1"/>
</dbReference>
<dbReference type="HAMAP" id="MF_01014">
    <property type="entry name" value="HisA"/>
    <property type="match status" value="1"/>
</dbReference>
<dbReference type="InterPro" id="IPR013785">
    <property type="entry name" value="Aldolase_TIM"/>
</dbReference>
<dbReference type="InterPro" id="IPR006062">
    <property type="entry name" value="His_biosynth"/>
</dbReference>
<dbReference type="InterPro" id="IPR006063">
    <property type="entry name" value="HisA_bact_arch"/>
</dbReference>
<dbReference type="InterPro" id="IPR044524">
    <property type="entry name" value="Isoase_HisA-like"/>
</dbReference>
<dbReference type="InterPro" id="IPR023016">
    <property type="entry name" value="Isoase_HisA-like_bact"/>
</dbReference>
<dbReference type="InterPro" id="IPR011060">
    <property type="entry name" value="RibuloseP-bd_barrel"/>
</dbReference>
<dbReference type="NCBIfam" id="TIGR00007">
    <property type="entry name" value="1-(5-phosphoribosyl)-5-[(5-phosphoribosylamino)methylideneamino]imidazole-4-carboxamide isomerase"/>
    <property type="match status" value="1"/>
</dbReference>
<dbReference type="PANTHER" id="PTHR43090">
    <property type="entry name" value="1-(5-PHOSPHORIBOSYL)-5-[(5-PHOSPHORIBOSYLAMINO)METHYLIDENEAMINO] IMIDAZOLE-4-CARBOXAMIDE ISOMERASE"/>
    <property type="match status" value="1"/>
</dbReference>
<dbReference type="PANTHER" id="PTHR43090:SF2">
    <property type="entry name" value="1-(5-PHOSPHORIBOSYL)-5-[(5-PHOSPHORIBOSYLAMINO)METHYLIDENEAMINO] IMIDAZOLE-4-CARBOXAMIDE ISOMERASE"/>
    <property type="match status" value="1"/>
</dbReference>
<dbReference type="Pfam" id="PF00977">
    <property type="entry name" value="His_biosynth"/>
    <property type="match status" value="1"/>
</dbReference>
<dbReference type="SUPFAM" id="SSF51366">
    <property type="entry name" value="Ribulose-phoshate binding barrel"/>
    <property type="match status" value="1"/>
</dbReference>
<gene>
    <name evidence="1" type="primary">hisA</name>
    <name type="ordered locus">BCAH187_A1568</name>
</gene>